<proteinExistence type="inferred from homology"/>
<protein>
    <recommendedName>
        <fullName evidence="1">Lysine--tRNA ligase</fullName>
        <ecNumber evidence="1">6.1.1.6</ecNumber>
    </recommendedName>
    <alternativeName>
        <fullName evidence="1">Lysyl-tRNA synthetase</fullName>
        <shortName evidence="1">LysRS</shortName>
    </alternativeName>
</protein>
<gene>
    <name evidence="1" type="primary">lysS</name>
    <name type="ordered locus">CCA_00839</name>
</gene>
<accession>Q821U6</accession>
<reference key="1">
    <citation type="journal article" date="2003" name="Nucleic Acids Res.">
        <title>Genome sequence of Chlamydophila caviae (Chlamydia psittaci GPIC): examining the role of niche-specific genes in the evolution of the Chlamydiaceae.</title>
        <authorList>
            <person name="Read T.D."/>
            <person name="Myers G.S.A."/>
            <person name="Brunham R.C."/>
            <person name="Nelson W.C."/>
            <person name="Paulsen I.T."/>
            <person name="Heidelberg J.F."/>
            <person name="Holtzapple E.K."/>
            <person name="Khouri H.M."/>
            <person name="Federova N.B."/>
            <person name="Carty H.A."/>
            <person name="Umayam L.A."/>
            <person name="Haft D.H."/>
            <person name="Peterson J.D."/>
            <person name="Beanan M.J."/>
            <person name="White O."/>
            <person name="Salzberg S.L."/>
            <person name="Hsia R.-C."/>
            <person name="McClarty G."/>
            <person name="Rank R.G."/>
            <person name="Bavoil P.M."/>
            <person name="Fraser C.M."/>
        </authorList>
    </citation>
    <scope>NUCLEOTIDE SEQUENCE [LARGE SCALE GENOMIC DNA]</scope>
    <source>
        <strain>ATCC VR-813 / DSM 19441 / 03DC25 / GPIC</strain>
    </source>
</reference>
<feature type="chain" id="PRO_0000152611" description="Lysine--tRNA ligase">
    <location>
        <begin position="1"/>
        <end position="525"/>
    </location>
</feature>
<feature type="binding site" evidence="1">
    <location>
        <position position="430"/>
    </location>
    <ligand>
        <name>Mg(2+)</name>
        <dbReference type="ChEBI" id="CHEBI:18420"/>
        <label>1</label>
    </ligand>
</feature>
<feature type="binding site" evidence="1">
    <location>
        <position position="437"/>
    </location>
    <ligand>
        <name>Mg(2+)</name>
        <dbReference type="ChEBI" id="CHEBI:18420"/>
        <label>1</label>
    </ligand>
</feature>
<feature type="binding site" evidence="1">
    <location>
        <position position="437"/>
    </location>
    <ligand>
        <name>Mg(2+)</name>
        <dbReference type="ChEBI" id="CHEBI:18420"/>
        <label>2</label>
    </ligand>
</feature>
<sequence>MSEAEYLTQEDFLQRSNKLQEISDLGINPYPYEFPGTSSVEEIKQEYASQTLGNSEDATNKKTPKVKISGRMVLFRSMGKNAFAQILDNDQKIQVMFNRDFSSVAGLPEDAEISPIKFIEKKLDLGDILGIEGYLFFTHSGELTILVETVTLLCKALISLPDKHAGLSDKEIRYRKRWLDLISSDEVRQTFFKRSRIIKLIRQYMDAQGFMEVETPILQNIYGGAEATPFVTTLNALHSEVFLRISLEIALKKILVGGTSRVYEIGKVFRNEGIDRTHNPEFTMIEAYAANVDYHSVMTYVENLVEYLVCALNDGSTVLTYSHLKQGPQTVDFKAPWIRMTMKDSIKTYGDVDVDLHADHELRNILKERTSLPEESYATAPRGLLITALFDELVCDKLIAPHHITDHPIETTPLCKSLRSGDADFVERFESFCLGKELCNAYSELNDPLHQRMLLEKQMEKKALDPDSEYHPIDEEFLEALCQGMPPAGGFGIGIDRLVMILTDAASIRDVLYFPAMRRLESENN</sequence>
<name>SYK_CHLCV</name>
<organism>
    <name type="scientific">Chlamydia caviae (strain ATCC VR-813 / DSM 19441 / 03DC25 / GPIC)</name>
    <name type="common">Chlamydophila caviae</name>
    <dbReference type="NCBI Taxonomy" id="227941"/>
    <lineage>
        <taxon>Bacteria</taxon>
        <taxon>Pseudomonadati</taxon>
        <taxon>Chlamydiota</taxon>
        <taxon>Chlamydiia</taxon>
        <taxon>Chlamydiales</taxon>
        <taxon>Chlamydiaceae</taxon>
        <taxon>Chlamydia/Chlamydophila group</taxon>
        <taxon>Chlamydia</taxon>
    </lineage>
</organism>
<keyword id="KW-0030">Aminoacyl-tRNA synthetase</keyword>
<keyword id="KW-0067">ATP-binding</keyword>
<keyword id="KW-0963">Cytoplasm</keyword>
<keyword id="KW-0436">Ligase</keyword>
<keyword id="KW-0460">Magnesium</keyword>
<keyword id="KW-0479">Metal-binding</keyword>
<keyword id="KW-0547">Nucleotide-binding</keyword>
<keyword id="KW-0648">Protein biosynthesis</keyword>
<comment type="catalytic activity">
    <reaction evidence="1">
        <text>tRNA(Lys) + L-lysine + ATP = L-lysyl-tRNA(Lys) + AMP + diphosphate</text>
        <dbReference type="Rhea" id="RHEA:20792"/>
        <dbReference type="Rhea" id="RHEA-COMP:9696"/>
        <dbReference type="Rhea" id="RHEA-COMP:9697"/>
        <dbReference type="ChEBI" id="CHEBI:30616"/>
        <dbReference type="ChEBI" id="CHEBI:32551"/>
        <dbReference type="ChEBI" id="CHEBI:33019"/>
        <dbReference type="ChEBI" id="CHEBI:78442"/>
        <dbReference type="ChEBI" id="CHEBI:78529"/>
        <dbReference type="ChEBI" id="CHEBI:456215"/>
        <dbReference type="EC" id="6.1.1.6"/>
    </reaction>
</comment>
<comment type="cofactor">
    <cofactor evidence="1">
        <name>Mg(2+)</name>
        <dbReference type="ChEBI" id="CHEBI:18420"/>
    </cofactor>
    <text evidence="1">Binds 3 Mg(2+) ions per subunit.</text>
</comment>
<comment type="subunit">
    <text evidence="1">Homodimer.</text>
</comment>
<comment type="subcellular location">
    <subcellularLocation>
        <location evidence="1">Cytoplasm</location>
    </subcellularLocation>
</comment>
<comment type="similarity">
    <text evidence="1">Belongs to the class-II aminoacyl-tRNA synthetase family.</text>
</comment>
<evidence type="ECO:0000255" key="1">
    <source>
        <dbReference type="HAMAP-Rule" id="MF_00252"/>
    </source>
</evidence>
<dbReference type="EC" id="6.1.1.6" evidence="1"/>
<dbReference type="EMBL" id="AE015925">
    <property type="protein sequence ID" value="AAP05580.1"/>
    <property type="molecule type" value="Genomic_DNA"/>
</dbReference>
<dbReference type="RefSeq" id="WP_011006794.1">
    <property type="nucleotide sequence ID" value="NC_003361.3"/>
</dbReference>
<dbReference type="SMR" id="Q821U6"/>
<dbReference type="STRING" id="227941.CCA_00839"/>
<dbReference type="KEGG" id="cca:CCA_00839"/>
<dbReference type="eggNOG" id="COG1190">
    <property type="taxonomic scope" value="Bacteria"/>
</dbReference>
<dbReference type="HOGENOM" id="CLU_008255_6_0_0"/>
<dbReference type="OrthoDB" id="9802326at2"/>
<dbReference type="Proteomes" id="UP000002193">
    <property type="component" value="Chromosome"/>
</dbReference>
<dbReference type="GO" id="GO:0005829">
    <property type="term" value="C:cytosol"/>
    <property type="evidence" value="ECO:0007669"/>
    <property type="project" value="TreeGrafter"/>
</dbReference>
<dbReference type="GO" id="GO:0005524">
    <property type="term" value="F:ATP binding"/>
    <property type="evidence" value="ECO:0007669"/>
    <property type="project" value="UniProtKB-UniRule"/>
</dbReference>
<dbReference type="GO" id="GO:0004824">
    <property type="term" value="F:lysine-tRNA ligase activity"/>
    <property type="evidence" value="ECO:0007669"/>
    <property type="project" value="UniProtKB-UniRule"/>
</dbReference>
<dbReference type="GO" id="GO:0000287">
    <property type="term" value="F:magnesium ion binding"/>
    <property type="evidence" value="ECO:0007669"/>
    <property type="project" value="UniProtKB-UniRule"/>
</dbReference>
<dbReference type="GO" id="GO:0000049">
    <property type="term" value="F:tRNA binding"/>
    <property type="evidence" value="ECO:0007669"/>
    <property type="project" value="TreeGrafter"/>
</dbReference>
<dbReference type="GO" id="GO:0006430">
    <property type="term" value="P:lysyl-tRNA aminoacylation"/>
    <property type="evidence" value="ECO:0007669"/>
    <property type="project" value="UniProtKB-UniRule"/>
</dbReference>
<dbReference type="CDD" id="cd04322">
    <property type="entry name" value="LysRS_N"/>
    <property type="match status" value="1"/>
</dbReference>
<dbReference type="FunFam" id="2.40.50.140:FF:000024">
    <property type="entry name" value="Lysine--tRNA ligase"/>
    <property type="match status" value="1"/>
</dbReference>
<dbReference type="Gene3D" id="3.30.930.10">
    <property type="entry name" value="Bira Bifunctional Protein, Domain 2"/>
    <property type="match status" value="1"/>
</dbReference>
<dbReference type="Gene3D" id="2.40.50.140">
    <property type="entry name" value="Nucleic acid-binding proteins"/>
    <property type="match status" value="1"/>
</dbReference>
<dbReference type="HAMAP" id="MF_00252">
    <property type="entry name" value="Lys_tRNA_synth_class2"/>
    <property type="match status" value="1"/>
</dbReference>
<dbReference type="InterPro" id="IPR004364">
    <property type="entry name" value="Aa-tRNA-synt_II"/>
</dbReference>
<dbReference type="InterPro" id="IPR006195">
    <property type="entry name" value="aa-tRNA-synth_II"/>
</dbReference>
<dbReference type="InterPro" id="IPR045864">
    <property type="entry name" value="aa-tRNA-synth_II/BPL/LPL"/>
</dbReference>
<dbReference type="InterPro" id="IPR002313">
    <property type="entry name" value="Lys-tRNA-ligase_II"/>
</dbReference>
<dbReference type="InterPro" id="IPR044136">
    <property type="entry name" value="Lys-tRNA-ligase_II_N"/>
</dbReference>
<dbReference type="InterPro" id="IPR018149">
    <property type="entry name" value="Lys-tRNA-synth_II_C"/>
</dbReference>
<dbReference type="InterPro" id="IPR012340">
    <property type="entry name" value="NA-bd_OB-fold"/>
</dbReference>
<dbReference type="InterPro" id="IPR004365">
    <property type="entry name" value="NA-bd_OB_tRNA"/>
</dbReference>
<dbReference type="NCBIfam" id="TIGR00499">
    <property type="entry name" value="lysS_bact"/>
    <property type="match status" value="1"/>
</dbReference>
<dbReference type="NCBIfam" id="NF001756">
    <property type="entry name" value="PRK00484.1"/>
    <property type="match status" value="1"/>
</dbReference>
<dbReference type="PANTHER" id="PTHR42918:SF15">
    <property type="entry name" value="LYSINE--TRNA LIGASE, CHLOROPLASTIC_MITOCHONDRIAL"/>
    <property type="match status" value="1"/>
</dbReference>
<dbReference type="PANTHER" id="PTHR42918">
    <property type="entry name" value="LYSYL-TRNA SYNTHETASE"/>
    <property type="match status" value="1"/>
</dbReference>
<dbReference type="Pfam" id="PF00152">
    <property type="entry name" value="tRNA-synt_2"/>
    <property type="match status" value="1"/>
</dbReference>
<dbReference type="Pfam" id="PF01336">
    <property type="entry name" value="tRNA_anti-codon"/>
    <property type="match status" value="1"/>
</dbReference>
<dbReference type="PRINTS" id="PR00982">
    <property type="entry name" value="TRNASYNTHLYS"/>
</dbReference>
<dbReference type="SUPFAM" id="SSF55681">
    <property type="entry name" value="Class II aaRS and biotin synthetases"/>
    <property type="match status" value="1"/>
</dbReference>
<dbReference type="SUPFAM" id="SSF50249">
    <property type="entry name" value="Nucleic acid-binding proteins"/>
    <property type="match status" value="1"/>
</dbReference>
<dbReference type="PROSITE" id="PS50862">
    <property type="entry name" value="AA_TRNA_LIGASE_II"/>
    <property type="match status" value="1"/>
</dbReference>